<feature type="chain" id="PRO_1000022562" description="Chorismate synthase">
    <location>
        <begin position="1"/>
        <end position="388"/>
    </location>
</feature>
<feature type="binding site" evidence="1">
    <location>
        <position position="39"/>
    </location>
    <ligand>
        <name>NADP(+)</name>
        <dbReference type="ChEBI" id="CHEBI:58349"/>
    </ligand>
</feature>
<feature type="binding site" evidence="1">
    <location>
        <position position="45"/>
    </location>
    <ligand>
        <name>NADP(+)</name>
        <dbReference type="ChEBI" id="CHEBI:58349"/>
    </ligand>
</feature>
<feature type="binding site" evidence="1">
    <location>
        <begin position="130"/>
        <end position="132"/>
    </location>
    <ligand>
        <name>FMN</name>
        <dbReference type="ChEBI" id="CHEBI:58210"/>
    </ligand>
</feature>
<feature type="binding site" evidence="1">
    <location>
        <begin position="251"/>
        <end position="252"/>
    </location>
    <ligand>
        <name>FMN</name>
        <dbReference type="ChEBI" id="CHEBI:58210"/>
    </ligand>
</feature>
<feature type="binding site" evidence="1">
    <location>
        <position position="296"/>
    </location>
    <ligand>
        <name>FMN</name>
        <dbReference type="ChEBI" id="CHEBI:58210"/>
    </ligand>
</feature>
<feature type="binding site" evidence="1">
    <location>
        <begin position="311"/>
        <end position="315"/>
    </location>
    <ligand>
        <name>FMN</name>
        <dbReference type="ChEBI" id="CHEBI:58210"/>
    </ligand>
</feature>
<feature type="binding site" evidence="1">
    <location>
        <position position="337"/>
    </location>
    <ligand>
        <name>FMN</name>
        <dbReference type="ChEBI" id="CHEBI:58210"/>
    </ligand>
</feature>
<dbReference type="EC" id="4.2.3.5" evidence="1"/>
<dbReference type="EMBL" id="CP000407">
    <property type="protein sequence ID" value="ABP90228.1"/>
    <property type="molecule type" value="Genomic_DNA"/>
</dbReference>
<dbReference type="SMR" id="A4VVT9"/>
<dbReference type="STRING" id="391295.SSU05_1262"/>
<dbReference type="KEGG" id="ssu:SSU05_1262"/>
<dbReference type="eggNOG" id="COG0082">
    <property type="taxonomic scope" value="Bacteria"/>
</dbReference>
<dbReference type="HOGENOM" id="CLU_034547_2_0_9"/>
<dbReference type="UniPathway" id="UPA00053">
    <property type="reaction ID" value="UER00090"/>
</dbReference>
<dbReference type="GO" id="GO:0005829">
    <property type="term" value="C:cytosol"/>
    <property type="evidence" value="ECO:0007669"/>
    <property type="project" value="TreeGrafter"/>
</dbReference>
<dbReference type="GO" id="GO:0004107">
    <property type="term" value="F:chorismate synthase activity"/>
    <property type="evidence" value="ECO:0007669"/>
    <property type="project" value="UniProtKB-UniRule"/>
</dbReference>
<dbReference type="GO" id="GO:0010181">
    <property type="term" value="F:FMN binding"/>
    <property type="evidence" value="ECO:0007669"/>
    <property type="project" value="TreeGrafter"/>
</dbReference>
<dbReference type="GO" id="GO:0008652">
    <property type="term" value="P:amino acid biosynthetic process"/>
    <property type="evidence" value="ECO:0007669"/>
    <property type="project" value="UniProtKB-KW"/>
</dbReference>
<dbReference type="GO" id="GO:0009073">
    <property type="term" value="P:aromatic amino acid family biosynthetic process"/>
    <property type="evidence" value="ECO:0007669"/>
    <property type="project" value="UniProtKB-KW"/>
</dbReference>
<dbReference type="GO" id="GO:0009423">
    <property type="term" value="P:chorismate biosynthetic process"/>
    <property type="evidence" value="ECO:0007669"/>
    <property type="project" value="UniProtKB-UniRule"/>
</dbReference>
<dbReference type="CDD" id="cd07304">
    <property type="entry name" value="Chorismate_synthase"/>
    <property type="match status" value="1"/>
</dbReference>
<dbReference type="FunFam" id="3.60.150.10:FF:000002">
    <property type="entry name" value="Chorismate synthase"/>
    <property type="match status" value="1"/>
</dbReference>
<dbReference type="Gene3D" id="3.60.150.10">
    <property type="entry name" value="Chorismate synthase AroC"/>
    <property type="match status" value="1"/>
</dbReference>
<dbReference type="HAMAP" id="MF_00300">
    <property type="entry name" value="Chorismate_synth"/>
    <property type="match status" value="1"/>
</dbReference>
<dbReference type="InterPro" id="IPR000453">
    <property type="entry name" value="Chorismate_synth"/>
</dbReference>
<dbReference type="InterPro" id="IPR035904">
    <property type="entry name" value="Chorismate_synth_AroC_sf"/>
</dbReference>
<dbReference type="InterPro" id="IPR020541">
    <property type="entry name" value="Chorismate_synthase_CS"/>
</dbReference>
<dbReference type="NCBIfam" id="TIGR00033">
    <property type="entry name" value="aroC"/>
    <property type="match status" value="1"/>
</dbReference>
<dbReference type="NCBIfam" id="NF003793">
    <property type="entry name" value="PRK05382.1"/>
    <property type="match status" value="1"/>
</dbReference>
<dbReference type="PANTHER" id="PTHR21085">
    <property type="entry name" value="CHORISMATE SYNTHASE"/>
    <property type="match status" value="1"/>
</dbReference>
<dbReference type="PANTHER" id="PTHR21085:SF0">
    <property type="entry name" value="CHORISMATE SYNTHASE"/>
    <property type="match status" value="1"/>
</dbReference>
<dbReference type="Pfam" id="PF01264">
    <property type="entry name" value="Chorismate_synt"/>
    <property type="match status" value="1"/>
</dbReference>
<dbReference type="PIRSF" id="PIRSF001456">
    <property type="entry name" value="Chorismate_synth"/>
    <property type="match status" value="1"/>
</dbReference>
<dbReference type="SUPFAM" id="SSF103263">
    <property type="entry name" value="Chorismate synthase, AroC"/>
    <property type="match status" value="1"/>
</dbReference>
<dbReference type="PROSITE" id="PS00787">
    <property type="entry name" value="CHORISMATE_SYNTHASE_1"/>
    <property type="match status" value="1"/>
</dbReference>
<dbReference type="PROSITE" id="PS00788">
    <property type="entry name" value="CHORISMATE_SYNTHASE_2"/>
    <property type="match status" value="1"/>
</dbReference>
<dbReference type="PROSITE" id="PS00789">
    <property type="entry name" value="CHORISMATE_SYNTHASE_3"/>
    <property type="match status" value="1"/>
</dbReference>
<organism>
    <name type="scientific">Streptococcus suis (strain 05ZYH33)</name>
    <dbReference type="NCBI Taxonomy" id="391295"/>
    <lineage>
        <taxon>Bacteria</taxon>
        <taxon>Bacillati</taxon>
        <taxon>Bacillota</taxon>
        <taxon>Bacilli</taxon>
        <taxon>Lactobacillales</taxon>
        <taxon>Streptococcaceae</taxon>
        <taxon>Streptococcus</taxon>
    </lineage>
</organism>
<accession>A4VVT9</accession>
<name>AROC_STRSY</name>
<proteinExistence type="inferred from homology"/>
<sequence length="388" mass="42497">MRYLTAGESHGPRLTAIIEGVPAGLPLTAEDINEELKRRQGGYGRGSRMQIETDRVEITAGVRHGKTTGAPITLNVTNKDHQKWLDIMAVEDIEEKLKSKRRIKHPRPGHADLVGGMKYRFDDLRNSLERSSARETTMRVAVGAVAKRILAELDIEIANHVVVFGGKEIDVPDGLSVAEIKERAAQSEVSIVNQEREEEIKAYIDQIKRDGDTIGGVIETVVGGVPAGLGSYVQWDKKLDAKLAQAVVSINAFKGVEFGVGFQAGYLKGSQVMDEILWSQEKGYTRRTNNLGGFEGGMTNGEALIIRGVMKPIPTLYKPLMSVDIDTHEPYKATVERSDPTALPAAGVVMESVVATTLATEILEKFSSDNMEELKAAVASHRDYVKNF</sequence>
<comment type="function">
    <text evidence="1">Catalyzes the anti-1,4-elimination of the C-3 phosphate and the C-6 proR hydrogen from 5-enolpyruvylshikimate-3-phosphate (EPSP) to yield chorismate, which is the branch point compound that serves as the starting substrate for the three terminal pathways of aromatic amino acid biosynthesis. This reaction introduces a second double bond into the aromatic ring system.</text>
</comment>
<comment type="catalytic activity">
    <reaction evidence="1">
        <text>5-O-(1-carboxyvinyl)-3-phosphoshikimate = chorismate + phosphate</text>
        <dbReference type="Rhea" id="RHEA:21020"/>
        <dbReference type="ChEBI" id="CHEBI:29748"/>
        <dbReference type="ChEBI" id="CHEBI:43474"/>
        <dbReference type="ChEBI" id="CHEBI:57701"/>
        <dbReference type="EC" id="4.2.3.5"/>
    </reaction>
</comment>
<comment type="cofactor">
    <cofactor evidence="1">
        <name>FMNH2</name>
        <dbReference type="ChEBI" id="CHEBI:57618"/>
    </cofactor>
    <text evidence="1">Reduced FMN (FMNH(2)).</text>
</comment>
<comment type="pathway">
    <text evidence="1">Metabolic intermediate biosynthesis; chorismate biosynthesis; chorismate from D-erythrose 4-phosphate and phosphoenolpyruvate: step 7/7.</text>
</comment>
<comment type="subunit">
    <text evidence="1">Homotetramer.</text>
</comment>
<comment type="similarity">
    <text evidence="1">Belongs to the chorismate synthase family.</text>
</comment>
<gene>
    <name evidence="1" type="primary">aroC</name>
    <name type="ordered locus">SSU05_1262</name>
</gene>
<evidence type="ECO:0000255" key="1">
    <source>
        <dbReference type="HAMAP-Rule" id="MF_00300"/>
    </source>
</evidence>
<keyword id="KW-0028">Amino-acid biosynthesis</keyword>
<keyword id="KW-0057">Aromatic amino acid biosynthesis</keyword>
<keyword id="KW-0274">FAD</keyword>
<keyword id="KW-0285">Flavoprotein</keyword>
<keyword id="KW-0288">FMN</keyword>
<keyword id="KW-0456">Lyase</keyword>
<keyword id="KW-0521">NADP</keyword>
<protein>
    <recommendedName>
        <fullName evidence="1">Chorismate synthase</fullName>
        <shortName evidence="1">CS</shortName>
        <ecNumber evidence="1">4.2.3.5</ecNumber>
    </recommendedName>
    <alternativeName>
        <fullName evidence="1">5-enolpyruvylshikimate-3-phosphate phospholyase</fullName>
    </alternativeName>
</protein>
<reference key="1">
    <citation type="journal article" date="2007" name="PLoS ONE">
        <title>A glimpse of streptococcal toxic shock syndrome from comparative genomics of S. suis 2 Chinese isolates.</title>
        <authorList>
            <person name="Chen C."/>
            <person name="Tang J."/>
            <person name="Dong W."/>
            <person name="Wang C."/>
            <person name="Feng Y."/>
            <person name="Wang J."/>
            <person name="Zheng F."/>
            <person name="Pan X."/>
            <person name="Liu D."/>
            <person name="Li M."/>
            <person name="Song Y."/>
            <person name="Zhu X."/>
            <person name="Sun H."/>
            <person name="Feng T."/>
            <person name="Guo Z."/>
            <person name="Ju A."/>
            <person name="Ge J."/>
            <person name="Dong Y."/>
            <person name="Sun W."/>
            <person name="Jiang Y."/>
            <person name="Wang J."/>
            <person name="Yan J."/>
            <person name="Yang H."/>
            <person name="Wang X."/>
            <person name="Gao G.F."/>
            <person name="Yang R."/>
            <person name="Wang J."/>
            <person name="Yu J."/>
        </authorList>
    </citation>
    <scope>NUCLEOTIDE SEQUENCE [LARGE SCALE GENOMIC DNA]</scope>
    <source>
        <strain>05ZYH33</strain>
    </source>
</reference>